<protein>
    <recommendedName>
        <fullName evidence="6">Beta-amyrin synthase 1</fullName>
        <ecNumber evidence="3 4">5.4.99.39</ecNumber>
    </recommendedName>
    <alternativeName>
        <fullName evidence="5">Protein LUP5 homolog</fullName>
    </alternativeName>
</protein>
<evidence type="ECO:0000250" key="1">
    <source>
        <dbReference type="UniProtKB" id="P48449"/>
    </source>
</evidence>
<evidence type="ECO:0000255" key="2"/>
<evidence type="ECO:0000269" key="3">
    <source>
    </source>
</evidence>
<evidence type="ECO:0000269" key="4">
    <source>
    </source>
</evidence>
<evidence type="ECO:0000303" key="5">
    <source>
    </source>
</evidence>
<evidence type="ECO:0000305" key="6"/>
<name>BAMS1_BARVU</name>
<feature type="chain" id="PRO_0000452137" description="Beta-amyrin synthase 1">
    <location>
        <begin position="1"/>
        <end position="762"/>
    </location>
</feature>
<feature type="repeat" description="PFTB 1" evidence="2">
    <location>
        <begin position="99"/>
        <end position="141"/>
    </location>
</feature>
<feature type="repeat" description="PFTB 2" evidence="2">
    <location>
        <begin position="149"/>
        <end position="190"/>
    </location>
</feature>
<feature type="repeat" description="PFTB 3" evidence="2">
    <location>
        <begin position="441"/>
        <end position="485"/>
    </location>
</feature>
<feature type="repeat" description="PFTB 4" evidence="2">
    <location>
        <begin position="515"/>
        <end position="560"/>
    </location>
</feature>
<feature type="repeat" description="PFTB 5" evidence="2">
    <location>
        <begin position="592"/>
        <end position="632"/>
    </location>
</feature>
<feature type="repeat" description="PFTB 6" evidence="2">
    <location>
        <begin position="641"/>
        <end position="682"/>
    </location>
</feature>
<feature type="repeat" description="PFTB 7" evidence="2">
    <location>
        <begin position="703"/>
        <end position="744"/>
    </location>
</feature>
<feature type="active site" description="Proton donor" evidence="1">
    <location>
        <position position="486"/>
    </location>
</feature>
<feature type="site" description="Transition state stabilizer" evidence="1">
    <location>
        <position position="419"/>
    </location>
</feature>
<feature type="site" description="Transition state stabilizer" evidence="1">
    <location>
        <position position="613"/>
    </location>
</feature>
<dbReference type="EC" id="5.4.99.39" evidence="3 4"/>
<dbReference type="EMBL" id="KP784690">
    <property type="protein sequence ID" value="ALR73780.1"/>
    <property type="molecule type" value="mRNA"/>
</dbReference>
<dbReference type="EMBL" id="JQ172795">
    <property type="protein sequence ID" value="AFF27505.1"/>
    <property type="molecule type" value="mRNA"/>
</dbReference>
<dbReference type="EMBL" id="JQ172796">
    <property type="protein sequence ID" value="AFF27506.1"/>
    <property type="molecule type" value="Genomic_DNA"/>
</dbReference>
<dbReference type="SMR" id="A0A0U2U4F3"/>
<dbReference type="BRENDA" id="5.4.99.39">
    <property type="organism ID" value="16171"/>
</dbReference>
<dbReference type="UniPathway" id="UPA00213"/>
<dbReference type="GO" id="GO:0005811">
    <property type="term" value="C:lipid droplet"/>
    <property type="evidence" value="ECO:0007669"/>
    <property type="project" value="InterPro"/>
</dbReference>
<dbReference type="GO" id="GO:0042300">
    <property type="term" value="F:beta-amyrin synthase activity"/>
    <property type="evidence" value="ECO:0000314"/>
    <property type="project" value="UniProtKB"/>
</dbReference>
<dbReference type="GO" id="GO:0016104">
    <property type="term" value="P:triterpenoid biosynthetic process"/>
    <property type="evidence" value="ECO:0000314"/>
    <property type="project" value="UniProtKB"/>
</dbReference>
<dbReference type="CDD" id="cd02892">
    <property type="entry name" value="SQCY_1"/>
    <property type="match status" value="1"/>
</dbReference>
<dbReference type="FunFam" id="1.50.10.20:FF:000044">
    <property type="entry name" value="Lupeol synthase"/>
    <property type="match status" value="1"/>
</dbReference>
<dbReference type="FunFam" id="1.50.10.20:FF:000011">
    <property type="entry name" value="Terpene cyclase/mutase family member"/>
    <property type="match status" value="1"/>
</dbReference>
<dbReference type="Gene3D" id="1.50.10.20">
    <property type="match status" value="2"/>
</dbReference>
<dbReference type="InterPro" id="IPR032696">
    <property type="entry name" value="SQ_cyclase_C"/>
</dbReference>
<dbReference type="InterPro" id="IPR032697">
    <property type="entry name" value="SQ_cyclase_N"/>
</dbReference>
<dbReference type="InterPro" id="IPR018333">
    <property type="entry name" value="Squalene_cyclase"/>
</dbReference>
<dbReference type="InterPro" id="IPR002365">
    <property type="entry name" value="Terpene_synthase_CS"/>
</dbReference>
<dbReference type="InterPro" id="IPR008930">
    <property type="entry name" value="Terpenoid_cyclase/PrenylTrfase"/>
</dbReference>
<dbReference type="NCBIfam" id="TIGR01787">
    <property type="entry name" value="squalene_cyclas"/>
    <property type="match status" value="1"/>
</dbReference>
<dbReference type="PANTHER" id="PTHR11764:SF52">
    <property type="entry name" value="AMYRIN SYNTHASE LUP2-RELATED"/>
    <property type="match status" value="1"/>
</dbReference>
<dbReference type="PANTHER" id="PTHR11764">
    <property type="entry name" value="TERPENE CYCLASE/MUTASE FAMILY MEMBER"/>
    <property type="match status" value="1"/>
</dbReference>
<dbReference type="Pfam" id="PF13243">
    <property type="entry name" value="SQHop_cyclase_C"/>
    <property type="match status" value="1"/>
</dbReference>
<dbReference type="Pfam" id="PF13249">
    <property type="entry name" value="SQHop_cyclase_N"/>
    <property type="match status" value="1"/>
</dbReference>
<dbReference type="SUPFAM" id="SSF48239">
    <property type="entry name" value="Terpenoid cyclases/Protein prenyltransferases"/>
    <property type="match status" value="2"/>
</dbReference>
<dbReference type="PROSITE" id="PS01074">
    <property type="entry name" value="TERPENE_SYNTHASES"/>
    <property type="match status" value="1"/>
</dbReference>
<proteinExistence type="evidence at protein level"/>
<accession>A0A0U2U4F3</accession>
<accession>H9NAL5</accession>
<reference key="1">
    <citation type="journal article" date="2015" name="Plant J.">
        <title>Identification and genome organization of saponin pathway genes from a wild crucifer, and their use for transient production of saponins in Nicotiana benthamiana.</title>
        <authorList>
            <person name="Khakimov B."/>
            <person name="Kuzina V."/>
            <person name="Erthmann P.O."/>
            <person name="Fukushima E.O."/>
            <person name="Augustin J.M."/>
            <person name="Olsen C.E."/>
            <person name="Scholtalbers J."/>
            <person name="Volpin H."/>
            <person name="Andersen S.B."/>
            <person name="Hauser T.P."/>
            <person name="Muranaka T."/>
            <person name="Bak S."/>
        </authorList>
    </citation>
    <scope>NUCLEOTIDE SEQUENCE [MRNA]</scope>
    <scope>FUNCTION</scope>
    <scope>CATALYTIC ACTIVITY</scope>
</reference>
<reference key="2">
    <citation type="submission" date="2011-11" db="EMBL/GenBank/DDBJ databases">
        <title>Cloning and characterization of beta-amyrin synthase gene in Barbarea vulgaris.</title>
        <authorList>
            <person name="Wei X."/>
            <person name="Li X."/>
        </authorList>
    </citation>
    <scope>NUCLEOTIDE SEQUENCE [GENOMIC DNA / MRNA]</scope>
</reference>
<reference key="3">
    <citation type="journal article" date="2018" name="Plant Mol. Biol.">
        <title>A tandem array of UDP-glycosyltransferases from the UGT73C subfamily glycosylate sapogenins, forming a spectrum of mono- and bisdesmosidic saponins.</title>
        <authorList>
            <person name="Erthmann P.O."/>
            <person name="Agerbirk N."/>
            <person name="Bak S."/>
        </authorList>
    </citation>
    <scope>FUNCTION</scope>
    <scope>CATALYTIC ACTIVITY</scope>
</reference>
<organism>
    <name type="scientific">Barbarea vulgaris</name>
    <name type="common">Yellow rocket</name>
    <name type="synonym">Erysimum barbarea</name>
    <dbReference type="NCBI Taxonomy" id="50459"/>
    <lineage>
        <taxon>Eukaryota</taxon>
        <taxon>Viridiplantae</taxon>
        <taxon>Streptophyta</taxon>
        <taxon>Embryophyta</taxon>
        <taxon>Tracheophyta</taxon>
        <taxon>Spermatophyta</taxon>
        <taxon>Magnoliopsida</taxon>
        <taxon>eudicotyledons</taxon>
        <taxon>Gunneridae</taxon>
        <taxon>Pentapetalae</taxon>
        <taxon>rosids</taxon>
        <taxon>malvids</taxon>
        <taxon>Brassicales</taxon>
        <taxon>Brassicaceae</taxon>
        <taxon>Cardamineae</taxon>
        <taxon>Barbarea</taxon>
    </lineage>
</organism>
<keyword id="KW-0413">Isomerase</keyword>
<keyword id="KW-0414">Isoprene biosynthesis</keyword>
<keyword id="KW-0677">Repeat</keyword>
<sequence>MWRLKLGEGNGDDPYLFSSNNFVGRQTWEFDPKAGTLEERAAVEEARRSFLVNRSRVKACSDLLWRMQFLKEAKFEQVIPPVKIEDAKDITYENATDSLRRGVSFFSALQASDGHWPGEIAGPLFFLPPLVFCLYITGHLEEIFDEEHRKEMLRHVYCHQNEDGGWGLHVESKSIMFCTVLNYICLRMLGEGPNGGRDNACKRARQWILDRGGVTYIPSWGKIWLSILGIYDWSGTNPMPPEIWLLPSFVPIHLAKTLCYCRMVYMPMSYLYGKRFVGPITPLILQLREELHLQPYEAINWNKTRRLYAKEDMYFPHPLVQDLIWDTLHIFVEPLLTHWPLNKLVREKALRLAMKHIHYEDENSHYITIGCVEKVLCMLACWIDDPNGDYFKKHLARIPDYMWVAEDGMKMQSFGSQQWDTGFAVQAIIASDLSSETGDVLKRGHDYIKKSQIRENPSGDFKSMYRHISKGAWTLSDRDHGWQVSDCTAEALKCCLLLSMMPAEVVGHKMDPEQLYDSVNLLLSLQSANGGVTAWEPVRAYAWTELLNPTEFLANLVAEREYVECTSSVVQALVLFQQLYPDHKTKKISRAIEKAVQFLENEQKPDGSWYGNWGVCFIYATWFALGGLAAAGKTYKTSQAMRKGVEFLLTTQKDDGGWGESYLSCPEQRYIPLEGNRSNLVQTAWAIMGLIHAGQAERDPIPLHRAAKLIINSQMENGDFPQQEIVGVFMRNCLLHYATFRNTFPLWALAEYRKAAFVTHKH</sequence>
<comment type="function">
    <text evidence="3 4">Component of the oleanane-type triterpene saponins biosynthetic pathway (PubMed:26333142, PubMed:29603041). Oxidosqualene cyclase converting oxidosqualene into beta-amyrin, generating five rings and eight asymmetric centers in a single transformation (PubMed:26333142, PubMed:29603041).</text>
</comment>
<comment type="catalytic activity">
    <reaction evidence="3 4">
        <text>(S)-2,3-epoxysqualene = beta-amyrin</text>
        <dbReference type="Rhea" id="RHEA:31007"/>
        <dbReference type="ChEBI" id="CHEBI:10352"/>
        <dbReference type="ChEBI" id="CHEBI:15441"/>
        <dbReference type="EC" id="5.4.99.39"/>
    </reaction>
    <physiologicalReaction direction="left-to-right" evidence="3 4">
        <dbReference type="Rhea" id="RHEA:31008"/>
    </physiologicalReaction>
</comment>
<comment type="pathway">
    <text evidence="6">Secondary metabolite biosynthesis; terpenoid biosynthesis.</text>
</comment>
<comment type="similarity">
    <text evidence="6">Belongs to the terpene cyclase/mutase family.</text>
</comment>
<gene>
    <name evidence="5" type="primary">LUP5</name>
    <name evidence="6" type="synonym">BAS1</name>
</gene>